<gene>
    <name type="primary">Hsh2d</name>
    <name type="synonym">Alx</name>
</gene>
<keyword id="KW-0963">Cytoplasm</keyword>
<keyword id="KW-0496">Mitochondrion</keyword>
<keyword id="KW-0597">Phosphoprotein</keyword>
<keyword id="KW-1185">Reference proteome</keyword>
<keyword id="KW-0727">SH2 domain</keyword>
<name>HSH2D_MOUSE</name>
<reference key="1">
    <citation type="journal article" date="2003" name="J. Biol. Chem.">
        <title>Cloning and characterization of ALX, an adaptor downstream of CD28.</title>
        <authorList>
            <person name="Greene T.A."/>
            <person name="Powell P."/>
            <person name="Nzerem C."/>
            <person name="Shapiro M.J."/>
            <person name="Shapiro V.S."/>
        </authorList>
    </citation>
    <scope>NUCLEOTIDE SEQUENCE [MRNA]</scope>
    <scope>TISSUE SPECIFICITY</scope>
    <source>
        <strain>C57BL/6J</strain>
        <tissue>Spleen</tissue>
    </source>
</reference>
<reference key="2">
    <citation type="journal article" date="2005" name="Science">
        <title>The transcriptional landscape of the mammalian genome.</title>
        <authorList>
            <person name="Carninci P."/>
            <person name="Kasukawa T."/>
            <person name="Katayama S."/>
            <person name="Gough J."/>
            <person name="Frith M.C."/>
            <person name="Maeda N."/>
            <person name="Oyama R."/>
            <person name="Ravasi T."/>
            <person name="Lenhard B."/>
            <person name="Wells C."/>
            <person name="Kodzius R."/>
            <person name="Shimokawa K."/>
            <person name="Bajic V.B."/>
            <person name="Brenner S.E."/>
            <person name="Batalov S."/>
            <person name="Forrest A.R."/>
            <person name="Zavolan M."/>
            <person name="Davis M.J."/>
            <person name="Wilming L.G."/>
            <person name="Aidinis V."/>
            <person name="Allen J.E."/>
            <person name="Ambesi-Impiombato A."/>
            <person name="Apweiler R."/>
            <person name="Aturaliya R.N."/>
            <person name="Bailey T.L."/>
            <person name="Bansal M."/>
            <person name="Baxter L."/>
            <person name="Beisel K.W."/>
            <person name="Bersano T."/>
            <person name="Bono H."/>
            <person name="Chalk A.M."/>
            <person name="Chiu K.P."/>
            <person name="Choudhary V."/>
            <person name="Christoffels A."/>
            <person name="Clutterbuck D.R."/>
            <person name="Crowe M.L."/>
            <person name="Dalla E."/>
            <person name="Dalrymple B.P."/>
            <person name="de Bono B."/>
            <person name="Della Gatta G."/>
            <person name="di Bernardo D."/>
            <person name="Down T."/>
            <person name="Engstrom P."/>
            <person name="Fagiolini M."/>
            <person name="Faulkner G."/>
            <person name="Fletcher C.F."/>
            <person name="Fukushima T."/>
            <person name="Furuno M."/>
            <person name="Futaki S."/>
            <person name="Gariboldi M."/>
            <person name="Georgii-Hemming P."/>
            <person name="Gingeras T.R."/>
            <person name="Gojobori T."/>
            <person name="Green R.E."/>
            <person name="Gustincich S."/>
            <person name="Harbers M."/>
            <person name="Hayashi Y."/>
            <person name="Hensch T.K."/>
            <person name="Hirokawa N."/>
            <person name="Hill D."/>
            <person name="Huminiecki L."/>
            <person name="Iacono M."/>
            <person name="Ikeo K."/>
            <person name="Iwama A."/>
            <person name="Ishikawa T."/>
            <person name="Jakt M."/>
            <person name="Kanapin A."/>
            <person name="Katoh M."/>
            <person name="Kawasawa Y."/>
            <person name="Kelso J."/>
            <person name="Kitamura H."/>
            <person name="Kitano H."/>
            <person name="Kollias G."/>
            <person name="Krishnan S.P."/>
            <person name="Kruger A."/>
            <person name="Kummerfeld S.K."/>
            <person name="Kurochkin I.V."/>
            <person name="Lareau L.F."/>
            <person name="Lazarevic D."/>
            <person name="Lipovich L."/>
            <person name="Liu J."/>
            <person name="Liuni S."/>
            <person name="McWilliam S."/>
            <person name="Madan Babu M."/>
            <person name="Madera M."/>
            <person name="Marchionni L."/>
            <person name="Matsuda H."/>
            <person name="Matsuzawa S."/>
            <person name="Miki H."/>
            <person name="Mignone F."/>
            <person name="Miyake S."/>
            <person name="Morris K."/>
            <person name="Mottagui-Tabar S."/>
            <person name="Mulder N."/>
            <person name="Nakano N."/>
            <person name="Nakauchi H."/>
            <person name="Ng P."/>
            <person name="Nilsson R."/>
            <person name="Nishiguchi S."/>
            <person name="Nishikawa S."/>
            <person name="Nori F."/>
            <person name="Ohara O."/>
            <person name="Okazaki Y."/>
            <person name="Orlando V."/>
            <person name="Pang K.C."/>
            <person name="Pavan W.J."/>
            <person name="Pavesi G."/>
            <person name="Pesole G."/>
            <person name="Petrovsky N."/>
            <person name="Piazza S."/>
            <person name="Reed J."/>
            <person name="Reid J.F."/>
            <person name="Ring B.Z."/>
            <person name="Ringwald M."/>
            <person name="Rost B."/>
            <person name="Ruan Y."/>
            <person name="Salzberg S.L."/>
            <person name="Sandelin A."/>
            <person name="Schneider C."/>
            <person name="Schoenbach C."/>
            <person name="Sekiguchi K."/>
            <person name="Semple C.A."/>
            <person name="Seno S."/>
            <person name="Sessa L."/>
            <person name="Sheng Y."/>
            <person name="Shibata Y."/>
            <person name="Shimada H."/>
            <person name="Shimada K."/>
            <person name="Silva D."/>
            <person name="Sinclair B."/>
            <person name="Sperling S."/>
            <person name="Stupka E."/>
            <person name="Sugiura K."/>
            <person name="Sultana R."/>
            <person name="Takenaka Y."/>
            <person name="Taki K."/>
            <person name="Tammoja K."/>
            <person name="Tan S.L."/>
            <person name="Tang S."/>
            <person name="Taylor M.S."/>
            <person name="Tegner J."/>
            <person name="Teichmann S.A."/>
            <person name="Ueda H.R."/>
            <person name="van Nimwegen E."/>
            <person name="Verardo R."/>
            <person name="Wei C.L."/>
            <person name="Yagi K."/>
            <person name="Yamanishi H."/>
            <person name="Zabarovsky E."/>
            <person name="Zhu S."/>
            <person name="Zimmer A."/>
            <person name="Hide W."/>
            <person name="Bult C."/>
            <person name="Grimmond S.M."/>
            <person name="Teasdale R.D."/>
            <person name="Liu E.T."/>
            <person name="Brusic V."/>
            <person name="Quackenbush J."/>
            <person name="Wahlestedt C."/>
            <person name="Mattick J.S."/>
            <person name="Hume D.A."/>
            <person name="Kai C."/>
            <person name="Sasaki D."/>
            <person name="Tomaru Y."/>
            <person name="Fukuda S."/>
            <person name="Kanamori-Katayama M."/>
            <person name="Suzuki M."/>
            <person name="Aoki J."/>
            <person name="Arakawa T."/>
            <person name="Iida J."/>
            <person name="Imamura K."/>
            <person name="Itoh M."/>
            <person name="Kato T."/>
            <person name="Kawaji H."/>
            <person name="Kawagashira N."/>
            <person name="Kawashima T."/>
            <person name="Kojima M."/>
            <person name="Kondo S."/>
            <person name="Konno H."/>
            <person name="Nakano K."/>
            <person name="Ninomiya N."/>
            <person name="Nishio T."/>
            <person name="Okada M."/>
            <person name="Plessy C."/>
            <person name="Shibata K."/>
            <person name="Shiraki T."/>
            <person name="Suzuki S."/>
            <person name="Tagami M."/>
            <person name="Waki K."/>
            <person name="Watahiki A."/>
            <person name="Okamura-Oho Y."/>
            <person name="Suzuki H."/>
            <person name="Kawai J."/>
            <person name="Hayashizaki Y."/>
        </authorList>
    </citation>
    <scope>NUCLEOTIDE SEQUENCE [LARGE SCALE MRNA]</scope>
    <source>
        <strain>NOD</strain>
        <tissue>Spleen</tissue>
    </source>
</reference>
<reference key="3">
    <citation type="journal article" date="2004" name="Genome Res.">
        <title>The status, quality, and expansion of the NIH full-length cDNA project: the Mammalian Gene Collection (MGC).</title>
        <authorList>
            <consortium name="The MGC Project Team"/>
        </authorList>
    </citation>
    <scope>NUCLEOTIDE SEQUENCE [LARGE SCALE MRNA]</scope>
    <source>
        <strain>129</strain>
        <tissue>Mammary gland</tissue>
    </source>
</reference>
<reference key="4">
    <citation type="journal article" date="2005" name="J. Biol. Chem.">
        <title>The adaptor protein HSH2 attenuates apoptosis in response to ligation of the B cell antigen receptor complex on the B lymphoma cell line, WEHI-231.</title>
        <authorList>
            <person name="Herrin B.R."/>
            <person name="Groeger A.L."/>
            <person name="Justement L.B."/>
        </authorList>
    </citation>
    <scope>FUNCTION</scope>
    <scope>SUBCELLULAR LOCATION</scope>
</reference>
<accession>Q6VYH9</accession>
<accession>Q52KL3</accession>
<evidence type="ECO:0000250" key="1"/>
<evidence type="ECO:0000255" key="2">
    <source>
        <dbReference type="PROSITE-ProRule" id="PRU00191"/>
    </source>
</evidence>
<evidence type="ECO:0000256" key="3">
    <source>
        <dbReference type="SAM" id="MobiDB-lite"/>
    </source>
</evidence>
<evidence type="ECO:0000269" key="4">
    <source>
    </source>
</evidence>
<evidence type="ECO:0000269" key="5">
    <source>
    </source>
</evidence>
<evidence type="ECO:0000305" key="6"/>
<proteinExistence type="evidence at transcript level"/>
<organism>
    <name type="scientific">Mus musculus</name>
    <name type="common">Mouse</name>
    <dbReference type="NCBI Taxonomy" id="10090"/>
    <lineage>
        <taxon>Eukaryota</taxon>
        <taxon>Metazoa</taxon>
        <taxon>Chordata</taxon>
        <taxon>Craniata</taxon>
        <taxon>Vertebrata</taxon>
        <taxon>Euteleostomi</taxon>
        <taxon>Mammalia</taxon>
        <taxon>Eutheria</taxon>
        <taxon>Euarchontoglires</taxon>
        <taxon>Glires</taxon>
        <taxon>Rodentia</taxon>
        <taxon>Myomorpha</taxon>
        <taxon>Muroidea</taxon>
        <taxon>Muridae</taxon>
        <taxon>Murinae</taxon>
        <taxon>Mus</taxon>
        <taxon>Mus</taxon>
    </lineage>
</organism>
<dbReference type="EMBL" id="AY319653">
    <property type="protein sequence ID" value="AAQ81286.1"/>
    <property type="molecule type" value="mRNA"/>
</dbReference>
<dbReference type="EMBL" id="AK157000">
    <property type="protein sequence ID" value="BAE33927.1"/>
    <property type="molecule type" value="mRNA"/>
</dbReference>
<dbReference type="EMBL" id="BC094291">
    <property type="protein sequence ID" value="AAH94291.1"/>
    <property type="molecule type" value="mRNA"/>
</dbReference>
<dbReference type="CCDS" id="CCDS22410.1"/>
<dbReference type="RefSeq" id="NP_922935.1">
    <property type="nucleotide sequence ID" value="NM_197944.1"/>
</dbReference>
<dbReference type="SMR" id="Q6VYH9"/>
<dbReference type="BioGRID" id="229083">
    <property type="interactions" value="1"/>
</dbReference>
<dbReference type="FunCoup" id="Q6VYH9">
    <property type="interactions" value="800"/>
</dbReference>
<dbReference type="STRING" id="10090.ENSMUSP00000071970"/>
<dbReference type="iPTMnet" id="Q6VYH9"/>
<dbReference type="PhosphoSitePlus" id="Q6VYH9"/>
<dbReference type="PaxDb" id="10090-ENSMUSP00000127575"/>
<dbReference type="ProteomicsDB" id="267020"/>
<dbReference type="Antibodypedia" id="27308">
    <property type="antibodies" value="160 antibodies from 24 providers"/>
</dbReference>
<dbReference type="DNASU" id="209488"/>
<dbReference type="Ensembl" id="ENSMUST00000072097.14">
    <property type="protein sequence ID" value="ENSMUSP00000071970.7"/>
    <property type="gene ID" value="ENSMUSG00000062007.14"/>
</dbReference>
<dbReference type="Ensembl" id="ENSMUST00000165324.2">
    <property type="protein sequence ID" value="ENSMUSP00000127575.2"/>
    <property type="gene ID" value="ENSMUSG00000062007.14"/>
</dbReference>
<dbReference type="GeneID" id="209488"/>
<dbReference type="KEGG" id="mmu:209488"/>
<dbReference type="UCSC" id="uc009mfl.1">
    <property type="organism name" value="mouse"/>
</dbReference>
<dbReference type="AGR" id="MGI:2676364"/>
<dbReference type="CTD" id="84941"/>
<dbReference type="MGI" id="MGI:2676364">
    <property type="gene designation" value="Hsh2d"/>
</dbReference>
<dbReference type="VEuPathDB" id="HostDB:ENSMUSG00000062007"/>
<dbReference type="eggNOG" id="ENOG502RZYN">
    <property type="taxonomic scope" value="Eukaryota"/>
</dbReference>
<dbReference type="GeneTree" id="ENSGT00940000161678"/>
<dbReference type="HOGENOM" id="CLU_067582_0_0_1"/>
<dbReference type="InParanoid" id="Q6VYH9"/>
<dbReference type="OMA" id="CGQKDPA"/>
<dbReference type="OrthoDB" id="67310at2759"/>
<dbReference type="PhylomeDB" id="Q6VYH9"/>
<dbReference type="TreeFam" id="TF336893"/>
<dbReference type="BioGRID-ORCS" id="209488">
    <property type="hits" value="2 hits in 81 CRISPR screens"/>
</dbReference>
<dbReference type="ChiTaRS" id="Fpr3">
    <property type="organism name" value="mouse"/>
</dbReference>
<dbReference type="PRO" id="PR:Q6VYH9"/>
<dbReference type="Proteomes" id="UP000000589">
    <property type="component" value="Chromosome 8"/>
</dbReference>
<dbReference type="RNAct" id="Q6VYH9">
    <property type="molecule type" value="protein"/>
</dbReference>
<dbReference type="Bgee" id="ENSMUSG00000062007">
    <property type="expression patterns" value="Expressed in granulocyte and 24 other cell types or tissues"/>
</dbReference>
<dbReference type="GO" id="GO:0005829">
    <property type="term" value="C:cytosol"/>
    <property type="evidence" value="ECO:0000314"/>
    <property type="project" value="MGI"/>
</dbReference>
<dbReference type="GO" id="GO:0005739">
    <property type="term" value="C:mitochondrion"/>
    <property type="evidence" value="ECO:0000314"/>
    <property type="project" value="MGI"/>
</dbReference>
<dbReference type="GO" id="GO:0030674">
    <property type="term" value="F:protein-macromolecule adaptor activity"/>
    <property type="evidence" value="ECO:0000314"/>
    <property type="project" value="MGI"/>
</dbReference>
<dbReference type="GO" id="GO:0002903">
    <property type="term" value="P:negative regulation of B cell apoptotic process"/>
    <property type="evidence" value="ECO:0000314"/>
    <property type="project" value="MGI"/>
</dbReference>
<dbReference type="GO" id="GO:0051902">
    <property type="term" value="P:negative regulation of mitochondrial depolarization"/>
    <property type="evidence" value="ECO:0000314"/>
    <property type="project" value="MGI"/>
</dbReference>
<dbReference type="GO" id="GO:0007165">
    <property type="term" value="P:signal transduction"/>
    <property type="evidence" value="ECO:0007669"/>
    <property type="project" value="InterPro"/>
</dbReference>
<dbReference type="GO" id="GO:0042110">
    <property type="term" value="P:T cell activation"/>
    <property type="evidence" value="ECO:0000314"/>
    <property type="project" value="MGI"/>
</dbReference>
<dbReference type="CDD" id="cd09946">
    <property type="entry name" value="SH2_HSH2_like"/>
    <property type="match status" value="1"/>
</dbReference>
<dbReference type="FunFam" id="3.30.505.10:FF:000059">
    <property type="entry name" value="hematopoietic SH2 domain-containing protein"/>
    <property type="match status" value="1"/>
</dbReference>
<dbReference type="Gene3D" id="3.30.505.10">
    <property type="entry name" value="SH2 domain"/>
    <property type="match status" value="1"/>
</dbReference>
<dbReference type="InterPro" id="IPR035047">
    <property type="entry name" value="HSH2D_SH2"/>
</dbReference>
<dbReference type="InterPro" id="IPR000980">
    <property type="entry name" value="SH2"/>
</dbReference>
<dbReference type="InterPro" id="IPR036860">
    <property type="entry name" value="SH2_dom_sf"/>
</dbReference>
<dbReference type="PANTHER" id="PTHR14388:SF3">
    <property type="entry name" value="HEMATOPOIETIC SH2 DOMAIN-CONTAINING PROTEIN"/>
    <property type="match status" value="1"/>
</dbReference>
<dbReference type="PANTHER" id="PTHR14388">
    <property type="entry name" value="T CELL-SPECIFIC ADAPTER PROTEIN TSAD"/>
    <property type="match status" value="1"/>
</dbReference>
<dbReference type="Pfam" id="PF00017">
    <property type="entry name" value="SH2"/>
    <property type="match status" value="1"/>
</dbReference>
<dbReference type="SMART" id="SM00252">
    <property type="entry name" value="SH2"/>
    <property type="match status" value="1"/>
</dbReference>
<dbReference type="SUPFAM" id="SSF55550">
    <property type="entry name" value="SH2 domain"/>
    <property type="match status" value="1"/>
</dbReference>
<dbReference type="PROSITE" id="PS50001">
    <property type="entry name" value="SH2"/>
    <property type="match status" value="1"/>
</dbReference>
<sequence>MAEARRLPPPLPPRLDWFVHTQADLLAQSGIPEWFHGTISREAAENMLESQPLGTFLIRVSHSHVGYTLSYKAQTCCRHFMVKLSEDGTCAFAGDHMTHASLHALVTFHQQKPIRPFGELLTQACGQEDPANVDYEDLFLYSNALVQDAESQILRTEVQRSSCPPEEASERKPSTTTKGEFASASCSPKALFEDSGQKLWKNLRSLPQTSQRVKQRLTSHLLAMNLLGDARQVAQQHHSPVTRAFSWDSTSHSEDSCAATTSLQNPAEPQALRGREATFRDSRPASWRKAFSGVKAWRGKVVRALSAQEPVDFPEAQGWLPEEYLPPPPFAPGY</sequence>
<feature type="chain" id="PRO_0000233130" description="Hematopoietic SH2 domain-containing protein">
    <location>
        <begin position="1"/>
        <end position="334"/>
    </location>
</feature>
<feature type="domain" description="SH2" evidence="2">
    <location>
        <begin position="34"/>
        <end position="125"/>
    </location>
</feature>
<feature type="region of interest" description="Disordered" evidence="3">
    <location>
        <begin position="157"/>
        <end position="181"/>
    </location>
</feature>
<feature type="region of interest" description="Disordered" evidence="3">
    <location>
        <begin position="254"/>
        <end position="280"/>
    </location>
</feature>
<feature type="compositionally biased region" description="Polar residues" evidence="3">
    <location>
        <begin position="258"/>
        <end position="267"/>
    </location>
</feature>
<feature type="sequence conflict" description="In Ref. 3; AAH94291." evidence="6" ref="3">
    <original>A</original>
    <variation>T</variation>
    <location>
        <position position="91"/>
    </location>
</feature>
<feature type="sequence conflict" description="In Ref. 3; AAH94291." evidence="6" ref="3">
    <original>I</original>
    <variation>F</variation>
    <location>
        <position position="153"/>
    </location>
</feature>
<feature type="sequence conflict" description="In Ref. 3; AAH94291." evidence="6" ref="3">
    <original>S</original>
    <variation>SS</variation>
    <location>
        <position position="162"/>
    </location>
</feature>
<feature type="sequence conflict" description="In Ref. 3; AAH94291." evidence="6" ref="3">
    <original>R</original>
    <variation>Q</variation>
    <location>
        <position position="216"/>
    </location>
</feature>
<feature type="sequence conflict" description="In Ref. 3; AAH94291." evidence="6" ref="3">
    <original>L</original>
    <variation>S</variation>
    <location>
        <position position="222"/>
    </location>
</feature>
<feature type="sequence conflict" description="In Ref. 3; AAH94291." evidence="6" ref="3">
    <original>Q</original>
    <variation>R</variation>
    <location>
        <position position="232"/>
    </location>
</feature>
<feature type="sequence conflict" description="In Ref. 3; AAH94291." evidence="6" ref="3">
    <original>S</original>
    <variation>P</variation>
    <location>
        <position position="256"/>
    </location>
</feature>
<feature type="sequence conflict" description="In Ref. 3; AAH94291." evidence="6" ref="3">
    <original>V</original>
    <variation>I</variation>
    <location>
        <position position="294"/>
    </location>
</feature>
<comment type="function">
    <text evidence="1 5">Adapter protein involved in tyrosine kinase and CD28 signaling (By similarity). May be a modulator of the apoptotic response through its ability to affect mitochondrial stability.</text>
</comment>
<comment type="subunit">
    <text evidence="1">Interacts with FES and TNK2.</text>
</comment>
<comment type="subcellular location">
    <subcellularLocation>
        <location evidence="5">Cytoplasm</location>
    </subcellularLocation>
    <subcellularLocation>
        <location evidence="5">Mitochondrion</location>
    </subcellularLocation>
</comment>
<comment type="tissue specificity">
    <text evidence="4">Predominantly expressed in spleen and thymus. Appears not to be expressed in heart, brain, liver, kidney, embryo, lung and ovary.</text>
</comment>
<comment type="PTM">
    <text evidence="1">May be phosphorylated by FES and ACK1.</text>
</comment>
<protein>
    <recommendedName>
        <fullName>Hematopoietic SH2 domain-containing protein</fullName>
        <shortName>Hematopoietic SH2 protein</shortName>
    </recommendedName>
    <alternativeName>
        <fullName>Adaptor in lymphocytes of unknown function X</fullName>
    </alternativeName>
</protein>